<accession>Q9JWM1</accession>
<accession>A1IPE1</accession>
<sequence length="447" mass="49758">MNQNHTILQNLPVGQKVGIAFSGGLDTSAALLWMKLKGALPYAYTANLGQPDEDDYNAIPKKAMEYGAENARLIDCRAQLAHEGIAAIQCGAFHVSTGGIAYFNTTPLGRAVTGTMLVSAMKEDDVNIWGDGSTYKGNDIERFYRYGLLTNPALKIYKPWLDQQFIDELGGRHEMSEFLIANGFNYKMSVEKAYSTDSNMLGATHEAKDLEFLNSGIKIVKPIMGIAFWDENVEIKPEEVSVRFEEGVPVALNGKEYADPVELFLEANRIGGRHGLGMSDQIENRIIEAKSRGIYEAPGMALFHIAYERLVTGIHNEDTIEQYRINGLRLGRLLYQGRWFDSQALMLRETAQRWVAKAITGEVTLELRRGNDYSILNTESPNLTYQPERLSMEKVEDAAFTPLDRIGQLTMRNLDITDTRAKLGIYSQSGLLALGEGSVLPQLGNKQ</sequence>
<reference key="1">
    <citation type="journal article" date="2000" name="Nature">
        <title>Complete DNA sequence of a serogroup A strain of Neisseria meningitidis Z2491.</title>
        <authorList>
            <person name="Parkhill J."/>
            <person name="Achtman M."/>
            <person name="James K.D."/>
            <person name="Bentley S.D."/>
            <person name="Churcher C.M."/>
            <person name="Klee S.R."/>
            <person name="Morelli G."/>
            <person name="Basham D."/>
            <person name="Brown D."/>
            <person name="Chillingworth T."/>
            <person name="Davies R.M."/>
            <person name="Davis P."/>
            <person name="Devlin K."/>
            <person name="Feltwell T."/>
            <person name="Hamlin N."/>
            <person name="Holroyd S."/>
            <person name="Jagels K."/>
            <person name="Leather S."/>
            <person name="Moule S."/>
            <person name="Mungall K.L."/>
            <person name="Quail M.A."/>
            <person name="Rajandream M.A."/>
            <person name="Rutherford K.M."/>
            <person name="Simmonds M."/>
            <person name="Skelton J."/>
            <person name="Whitehead S."/>
            <person name="Spratt B.G."/>
            <person name="Barrell B.G."/>
        </authorList>
    </citation>
    <scope>NUCLEOTIDE SEQUENCE [LARGE SCALE GENOMIC DNA]</scope>
    <source>
        <strain>DSM 15465 / Z2491</strain>
    </source>
</reference>
<gene>
    <name type="primary">argG</name>
    <name type="ordered locus">NMA0303</name>
</gene>
<protein>
    <recommendedName>
        <fullName>Argininosuccinate synthase</fullName>
        <ecNumber>6.3.4.5</ecNumber>
    </recommendedName>
    <alternativeName>
        <fullName>Citrulline--aspartate ligase</fullName>
    </alternativeName>
</protein>
<feature type="chain" id="PRO_0000148701" description="Argininosuccinate synthase">
    <location>
        <begin position="1"/>
        <end position="447"/>
    </location>
</feature>
<feature type="binding site" evidence="1">
    <location>
        <begin position="20"/>
        <end position="28"/>
    </location>
    <ligand>
        <name>ATP</name>
        <dbReference type="ChEBI" id="CHEBI:30616"/>
    </ligand>
</feature>
<feature type="binding site" evidence="1">
    <location>
        <position position="46"/>
    </location>
    <ligand>
        <name>ATP</name>
        <dbReference type="ChEBI" id="CHEBI:30616"/>
    </ligand>
</feature>
<feature type="binding site" evidence="1">
    <location>
        <position position="102"/>
    </location>
    <ligand>
        <name>L-citrulline</name>
        <dbReference type="ChEBI" id="CHEBI:57743"/>
    </ligand>
</feature>
<feature type="binding site" evidence="1">
    <location>
        <position position="132"/>
    </location>
    <ligand>
        <name>ATP</name>
        <dbReference type="ChEBI" id="CHEBI:30616"/>
    </ligand>
</feature>
<feature type="binding site" evidence="1">
    <location>
        <position position="134"/>
    </location>
    <ligand>
        <name>ATP</name>
        <dbReference type="ChEBI" id="CHEBI:30616"/>
    </ligand>
</feature>
<feature type="binding site" evidence="1">
    <location>
        <position position="134"/>
    </location>
    <ligand>
        <name>L-aspartate</name>
        <dbReference type="ChEBI" id="CHEBI:29991"/>
    </ligand>
</feature>
<feature type="binding site" evidence="1">
    <location>
        <position position="138"/>
    </location>
    <ligand>
        <name>L-aspartate</name>
        <dbReference type="ChEBI" id="CHEBI:29991"/>
    </ligand>
</feature>
<feature type="binding site" evidence="1">
    <location>
        <position position="138"/>
    </location>
    <ligand>
        <name>L-citrulline</name>
        <dbReference type="ChEBI" id="CHEBI:57743"/>
    </ligand>
</feature>
<feature type="binding site" evidence="1">
    <location>
        <position position="139"/>
    </location>
    <ligand>
        <name>ATP</name>
        <dbReference type="ChEBI" id="CHEBI:30616"/>
    </ligand>
</feature>
<feature type="binding site" evidence="1">
    <location>
        <position position="139"/>
    </location>
    <ligand>
        <name>L-aspartate</name>
        <dbReference type="ChEBI" id="CHEBI:29991"/>
    </ligand>
</feature>
<feature type="binding site" evidence="1">
    <location>
        <position position="142"/>
    </location>
    <ligand>
        <name>L-citrulline</name>
        <dbReference type="ChEBI" id="CHEBI:57743"/>
    </ligand>
</feature>
<feature type="binding site" evidence="1">
    <location>
        <position position="195"/>
    </location>
    <ligand>
        <name>L-citrulline</name>
        <dbReference type="ChEBI" id="CHEBI:57743"/>
    </ligand>
</feature>
<feature type="binding site" evidence="1">
    <location>
        <position position="197"/>
    </location>
    <ligand>
        <name>ATP</name>
        <dbReference type="ChEBI" id="CHEBI:30616"/>
    </ligand>
</feature>
<feature type="binding site" evidence="1">
    <location>
        <position position="204"/>
    </location>
    <ligand>
        <name>L-citrulline</name>
        <dbReference type="ChEBI" id="CHEBI:57743"/>
    </ligand>
</feature>
<feature type="binding site" evidence="1">
    <location>
        <position position="206"/>
    </location>
    <ligand>
        <name>L-citrulline</name>
        <dbReference type="ChEBI" id="CHEBI:57743"/>
    </ligand>
</feature>
<feature type="binding site" evidence="1">
    <location>
        <position position="283"/>
    </location>
    <ligand>
        <name>L-citrulline</name>
        <dbReference type="ChEBI" id="CHEBI:57743"/>
    </ligand>
</feature>
<evidence type="ECO:0000250" key="1"/>
<evidence type="ECO:0000305" key="2"/>
<organism>
    <name type="scientific">Neisseria meningitidis serogroup A / serotype 4A (strain DSM 15465 / Z2491)</name>
    <dbReference type="NCBI Taxonomy" id="122587"/>
    <lineage>
        <taxon>Bacteria</taxon>
        <taxon>Pseudomonadati</taxon>
        <taxon>Pseudomonadota</taxon>
        <taxon>Betaproteobacteria</taxon>
        <taxon>Neisseriales</taxon>
        <taxon>Neisseriaceae</taxon>
        <taxon>Neisseria</taxon>
    </lineage>
</organism>
<name>ASSY_NEIMA</name>
<keyword id="KW-0028">Amino-acid biosynthesis</keyword>
<keyword id="KW-0055">Arginine biosynthesis</keyword>
<keyword id="KW-0067">ATP-binding</keyword>
<keyword id="KW-0963">Cytoplasm</keyword>
<keyword id="KW-0436">Ligase</keyword>
<keyword id="KW-0547">Nucleotide-binding</keyword>
<proteinExistence type="inferred from homology"/>
<dbReference type="EC" id="6.3.4.5"/>
<dbReference type="EMBL" id="AL157959">
    <property type="protein sequence ID" value="CAM07605.1"/>
    <property type="molecule type" value="Genomic_DNA"/>
</dbReference>
<dbReference type="PIR" id="F82025">
    <property type="entry name" value="F82025"/>
</dbReference>
<dbReference type="RefSeq" id="WP_002246536.1">
    <property type="nucleotide sequence ID" value="NC_003116.1"/>
</dbReference>
<dbReference type="SMR" id="Q9JWM1"/>
<dbReference type="EnsemblBacteria" id="CAM07605">
    <property type="protein sequence ID" value="CAM07605"/>
    <property type="gene ID" value="NMA0303"/>
</dbReference>
<dbReference type="GeneID" id="93387054"/>
<dbReference type="KEGG" id="nma:NMA0303"/>
<dbReference type="HOGENOM" id="CLU_032784_4_1_4"/>
<dbReference type="UniPathway" id="UPA00068">
    <property type="reaction ID" value="UER00113"/>
</dbReference>
<dbReference type="Proteomes" id="UP000000626">
    <property type="component" value="Chromosome"/>
</dbReference>
<dbReference type="GO" id="GO:0005737">
    <property type="term" value="C:cytoplasm"/>
    <property type="evidence" value="ECO:0007669"/>
    <property type="project" value="UniProtKB-SubCell"/>
</dbReference>
<dbReference type="GO" id="GO:0004055">
    <property type="term" value="F:argininosuccinate synthase activity"/>
    <property type="evidence" value="ECO:0007669"/>
    <property type="project" value="UniProtKB-UniRule"/>
</dbReference>
<dbReference type="GO" id="GO:0005524">
    <property type="term" value="F:ATP binding"/>
    <property type="evidence" value="ECO:0007669"/>
    <property type="project" value="UniProtKB-UniRule"/>
</dbReference>
<dbReference type="GO" id="GO:0042803">
    <property type="term" value="F:protein homodimerization activity"/>
    <property type="evidence" value="ECO:0007669"/>
    <property type="project" value="InterPro"/>
</dbReference>
<dbReference type="GO" id="GO:0000053">
    <property type="term" value="P:argininosuccinate metabolic process"/>
    <property type="evidence" value="ECO:0007669"/>
    <property type="project" value="TreeGrafter"/>
</dbReference>
<dbReference type="GO" id="GO:0006526">
    <property type="term" value="P:L-arginine biosynthetic process"/>
    <property type="evidence" value="ECO:0007669"/>
    <property type="project" value="UniProtKB-UniRule"/>
</dbReference>
<dbReference type="GO" id="GO:0000050">
    <property type="term" value="P:urea cycle"/>
    <property type="evidence" value="ECO:0007669"/>
    <property type="project" value="TreeGrafter"/>
</dbReference>
<dbReference type="CDD" id="cd01999">
    <property type="entry name" value="ASS"/>
    <property type="match status" value="1"/>
</dbReference>
<dbReference type="FunFam" id="1.10.287.400:FF:000001">
    <property type="entry name" value="Argininosuccinate synthase"/>
    <property type="match status" value="1"/>
</dbReference>
<dbReference type="Gene3D" id="1.10.287.400">
    <property type="match status" value="1"/>
</dbReference>
<dbReference type="Gene3D" id="3.90.1260.10">
    <property type="entry name" value="Argininosuccinate synthetase, chain A, domain 2"/>
    <property type="match status" value="1"/>
</dbReference>
<dbReference type="Gene3D" id="3.40.50.620">
    <property type="entry name" value="HUPs"/>
    <property type="match status" value="1"/>
</dbReference>
<dbReference type="HAMAP" id="MF_00581">
    <property type="entry name" value="Arg_succ_synth_type2"/>
    <property type="match status" value="1"/>
</dbReference>
<dbReference type="InterPro" id="IPR023437">
    <property type="entry name" value="Arg_succ_synth_type2_subfam"/>
</dbReference>
<dbReference type="InterPro" id="IPR048268">
    <property type="entry name" value="Arginosuc_syn_C"/>
</dbReference>
<dbReference type="InterPro" id="IPR048267">
    <property type="entry name" value="Arginosuc_syn_N"/>
</dbReference>
<dbReference type="InterPro" id="IPR001518">
    <property type="entry name" value="Arginosuc_synth"/>
</dbReference>
<dbReference type="InterPro" id="IPR018223">
    <property type="entry name" value="Arginosuc_synth_CS"/>
</dbReference>
<dbReference type="InterPro" id="IPR023434">
    <property type="entry name" value="Arginosuc_synth_type_1_subfam"/>
</dbReference>
<dbReference type="InterPro" id="IPR024074">
    <property type="entry name" value="AS_cat/multimer_dom_body"/>
</dbReference>
<dbReference type="InterPro" id="IPR024073">
    <property type="entry name" value="AS_multimer_C_tail"/>
</dbReference>
<dbReference type="InterPro" id="IPR014729">
    <property type="entry name" value="Rossmann-like_a/b/a_fold"/>
</dbReference>
<dbReference type="NCBIfam" id="TIGR00032">
    <property type="entry name" value="argG"/>
    <property type="match status" value="1"/>
</dbReference>
<dbReference type="NCBIfam" id="NF003779">
    <property type="entry name" value="PRK05370.1"/>
    <property type="match status" value="1"/>
</dbReference>
<dbReference type="PANTHER" id="PTHR11587">
    <property type="entry name" value="ARGININOSUCCINATE SYNTHASE"/>
    <property type="match status" value="1"/>
</dbReference>
<dbReference type="PANTHER" id="PTHR11587:SF2">
    <property type="entry name" value="ARGININOSUCCINATE SYNTHASE"/>
    <property type="match status" value="1"/>
</dbReference>
<dbReference type="Pfam" id="PF20979">
    <property type="entry name" value="Arginosuc_syn_C"/>
    <property type="match status" value="1"/>
</dbReference>
<dbReference type="Pfam" id="PF00764">
    <property type="entry name" value="Arginosuc_synth"/>
    <property type="match status" value="1"/>
</dbReference>
<dbReference type="SUPFAM" id="SSF52402">
    <property type="entry name" value="Adenine nucleotide alpha hydrolases-like"/>
    <property type="match status" value="1"/>
</dbReference>
<dbReference type="SUPFAM" id="SSF69864">
    <property type="entry name" value="Argininosuccinate synthetase, C-terminal domain"/>
    <property type="match status" value="1"/>
</dbReference>
<dbReference type="PROSITE" id="PS00564">
    <property type="entry name" value="ARGININOSUCCIN_SYN_1"/>
    <property type="match status" value="1"/>
</dbReference>
<dbReference type="PROSITE" id="PS00565">
    <property type="entry name" value="ARGININOSUCCIN_SYN_2"/>
    <property type="match status" value="1"/>
</dbReference>
<comment type="catalytic activity">
    <reaction>
        <text>L-citrulline + L-aspartate + ATP = 2-(N(omega)-L-arginino)succinate + AMP + diphosphate + H(+)</text>
        <dbReference type="Rhea" id="RHEA:10932"/>
        <dbReference type="ChEBI" id="CHEBI:15378"/>
        <dbReference type="ChEBI" id="CHEBI:29991"/>
        <dbReference type="ChEBI" id="CHEBI:30616"/>
        <dbReference type="ChEBI" id="CHEBI:33019"/>
        <dbReference type="ChEBI" id="CHEBI:57472"/>
        <dbReference type="ChEBI" id="CHEBI:57743"/>
        <dbReference type="ChEBI" id="CHEBI:456215"/>
        <dbReference type="EC" id="6.3.4.5"/>
    </reaction>
</comment>
<comment type="pathway">
    <text>Amino-acid biosynthesis; L-arginine biosynthesis; L-arginine from L-ornithine and carbamoyl phosphate: step 2/3.</text>
</comment>
<comment type="subunit">
    <text evidence="1">Homotetramer.</text>
</comment>
<comment type="subcellular location">
    <subcellularLocation>
        <location evidence="1">Cytoplasm</location>
    </subcellularLocation>
</comment>
<comment type="similarity">
    <text evidence="2">Belongs to the argininosuccinate synthase family. Type 2 subfamily.</text>
</comment>